<sequence length="101" mass="10786">SLIAERQRVMAAQVALRRQQAQEEELGISHPIPLPSATELFVKKENSGGSSCLLLESSSPTHSTSTVTTVSTSPSEGRMLIQDVPSITSRGHLESTSDLVV</sequence>
<protein>
    <recommendedName>
        <fullName>Doublesex- and mab-3-related transcription factor 1</fullName>
    </recommendedName>
</protein>
<dbReference type="EMBL" id="AF192560">
    <property type="protein sequence ID" value="AAF03893.1"/>
    <property type="molecule type" value="mRNA"/>
</dbReference>
<dbReference type="SMR" id="Q9PUE0"/>
<dbReference type="eggNOG" id="KOG3815">
    <property type="taxonomic scope" value="Eukaryota"/>
</dbReference>
<dbReference type="GO" id="GO:0005634">
    <property type="term" value="C:nucleus"/>
    <property type="evidence" value="ECO:0007669"/>
    <property type="project" value="UniProtKB-SubCell"/>
</dbReference>
<dbReference type="GO" id="GO:0000981">
    <property type="term" value="F:DNA-binding transcription factor activity, RNA polymerase II-specific"/>
    <property type="evidence" value="ECO:0007669"/>
    <property type="project" value="TreeGrafter"/>
</dbReference>
<dbReference type="GO" id="GO:0046872">
    <property type="term" value="F:metal ion binding"/>
    <property type="evidence" value="ECO:0007669"/>
    <property type="project" value="UniProtKB-KW"/>
</dbReference>
<dbReference type="GO" id="GO:0000978">
    <property type="term" value="F:RNA polymerase II cis-regulatory region sequence-specific DNA binding"/>
    <property type="evidence" value="ECO:0007669"/>
    <property type="project" value="TreeGrafter"/>
</dbReference>
<dbReference type="GO" id="GO:0030154">
    <property type="term" value="P:cell differentiation"/>
    <property type="evidence" value="ECO:0007669"/>
    <property type="project" value="UniProtKB-KW"/>
</dbReference>
<dbReference type="GO" id="GO:0007548">
    <property type="term" value="P:sex differentiation"/>
    <property type="evidence" value="ECO:0007669"/>
    <property type="project" value="UniProtKB-KW"/>
</dbReference>
<dbReference type="InterPro" id="IPR026607">
    <property type="entry name" value="DMRT"/>
</dbReference>
<dbReference type="InterPro" id="IPR022114">
    <property type="entry name" value="DMRT1-like"/>
</dbReference>
<dbReference type="PANTHER" id="PTHR12322">
    <property type="entry name" value="DOUBLESEX AND MAB-3 RELATED TRANSCRIPTION FACTOR DMRT"/>
    <property type="match status" value="1"/>
</dbReference>
<dbReference type="PANTHER" id="PTHR12322:SF70">
    <property type="entry name" value="DOUBLESEX- AND MAB-3-RELATED TRANSCRIPTION FACTOR 1"/>
    <property type="match status" value="1"/>
</dbReference>
<dbReference type="Pfam" id="PF12374">
    <property type="entry name" value="Dmrt1"/>
    <property type="match status" value="1"/>
</dbReference>
<evidence type="ECO:0000255" key="1">
    <source>
        <dbReference type="PROSITE-ProRule" id="PRU00070"/>
    </source>
</evidence>
<evidence type="ECO:0000256" key="2">
    <source>
        <dbReference type="SAM" id="MobiDB-lite"/>
    </source>
</evidence>
<evidence type="ECO:0000305" key="3"/>
<gene>
    <name type="primary">DMRT1</name>
</gene>
<comment type="function">
    <text>May be required for testis development.</text>
</comment>
<comment type="subcellular location">
    <subcellularLocation>
        <location evidence="1">Nucleus</location>
    </subcellularLocation>
</comment>
<comment type="developmental stage">
    <text>Expressed in the developing urogenital system (developmental stages 20 to 23) and later in the gonads (stages 24 to 27) at both male- and female-producing temperatures, but up-regulated at the male-determining temperature. May be highly expressed in testicular differentiation and weakly expressed in ovarian differentiation.</text>
</comment>
<comment type="similarity">
    <text evidence="3">Belongs to the DMRT family.</text>
</comment>
<organism>
    <name type="scientific">Alligator mississippiensis</name>
    <name type="common">American alligator</name>
    <dbReference type="NCBI Taxonomy" id="8496"/>
    <lineage>
        <taxon>Eukaryota</taxon>
        <taxon>Metazoa</taxon>
        <taxon>Chordata</taxon>
        <taxon>Craniata</taxon>
        <taxon>Vertebrata</taxon>
        <taxon>Euteleostomi</taxon>
        <taxon>Archelosauria</taxon>
        <taxon>Archosauria</taxon>
        <taxon>Crocodylia</taxon>
        <taxon>Alligatoridae</taxon>
        <taxon>Alligatorinae</taxon>
        <taxon>Alligator</taxon>
    </lineage>
</organism>
<keyword id="KW-0217">Developmental protein</keyword>
<keyword id="KW-0221">Differentiation</keyword>
<keyword id="KW-0238">DNA-binding</keyword>
<keyword id="KW-0479">Metal-binding</keyword>
<keyword id="KW-0539">Nucleus</keyword>
<keyword id="KW-0726">Sexual differentiation</keyword>
<keyword id="KW-0804">Transcription</keyword>
<keyword id="KW-0805">Transcription regulation</keyword>
<keyword id="KW-0862">Zinc</keyword>
<reference key="1">
    <citation type="journal article" date="1999" name="Nature">
        <title>Conservation of a sex-determining gene.</title>
        <authorList>
            <person name="Smith C.A."/>
            <person name="McClive P.J."/>
            <person name="Western P.S."/>
            <person name="Reed K.J."/>
            <person name="Sinclair A.H."/>
        </authorList>
    </citation>
    <scope>NUCLEOTIDE SEQUENCE [MRNA]</scope>
    <source>
        <tissue>Embryonic testis</tissue>
    </source>
</reference>
<name>DMRT1_ALLMI</name>
<accession>Q9PUE0</accession>
<proteinExistence type="evidence at transcript level"/>
<feature type="chain" id="PRO_0000207046" description="Doublesex- and mab-3-related transcription factor 1">
    <location>
        <begin position="1" status="less than"/>
        <end position="101" status="greater than"/>
    </location>
</feature>
<feature type="DNA-binding region" description="DM" evidence="1">
    <location>
        <begin position="1" status="less than"/>
        <end position="13"/>
    </location>
</feature>
<feature type="region of interest" description="Disordered" evidence="2">
    <location>
        <begin position="52"/>
        <end position="79"/>
    </location>
</feature>
<feature type="compositionally biased region" description="Low complexity" evidence="2">
    <location>
        <begin position="52"/>
        <end position="75"/>
    </location>
</feature>
<feature type="non-terminal residue">
    <location>
        <position position="1"/>
    </location>
</feature>
<feature type="non-terminal residue">
    <location>
        <position position="101"/>
    </location>
</feature>